<sequence>MHKAGQLGLCARAWNSVRMASSGMTRRDPLANKVALVTASTDGIGFAIARRLAQDGAHVVVSSRKQQNVDQAVATLQGEGLSVTGTVCHVGKAEDRERLVATAVKLHGGIDILVSNAAVNPFFGSLMDVTEEVWDKTLDINVKAPALMTKAVVPEMEKRGGGSVVIVSSIAAFSPSPGFSPYNVSKTALLGLTKTLAIELAPRNIRVNCLAPGLIKTSFSRMLWMDKEKEESMKETLRIRRLGEPEDCAGIVSFLCSEDASYITGETVVVGGGTPSRL</sequence>
<comment type="function">
    <text evidence="4">NADPH-dependent oxidoreductase which catalyzes the reduction of a variety of compounds bearing carbonyl groups including ketosteroids, alpha-dicarbonyl compounds, aldehydes, aromatic ketones and quinones. Reduces 3-ketosteroids and benzil into 3beta-hydroxysteroids and R-benzoin, respectively, in contrast to the stereoselectivity of non-primate DHRS4s which produce 3alpha-hydroxysteroids and S-benzoin. Diplays low activity toward all-trans-retinal and no activity toward 9-cis-retinal as compared to non-primate mammals. In the reverse reaction, catalyze the NAD-dependent oxidation of 3beta-hydroxysteroids and alcohol, but with much lower efficiency. Involved in the metabolism of 3beta-hydroxysteroids, isatin and xenobiotic carbonyl compounds.</text>
</comment>
<comment type="catalytic activity">
    <reaction evidence="4">
        <text>a secondary alcohol + NADP(+) = a ketone + NADPH + H(+)</text>
        <dbReference type="Rhea" id="RHEA:19257"/>
        <dbReference type="ChEBI" id="CHEBI:15378"/>
        <dbReference type="ChEBI" id="CHEBI:17087"/>
        <dbReference type="ChEBI" id="CHEBI:35681"/>
        <dbReference type="ChEBI" id="CHEBI:57783"/>
        <dbReference type="ChEBI" id="CHEBI:58349"/>
        <dbReference type="EC" id="1.1.1.184"/>
    </reaction>
    <physiologicalReaction direction="right-to-left" evidence="4">
        <dbReference type="Rhea" id="RHEA:19259"/>
    </physiologicalReaction>
</comment>
<comment type="catalytic activity">
    <reaction evidence="4">
        <text>3beta-hydroxy-5beta-pregnane-20-one + NADP(+) = 5beta-pregnan-3,20-dione + NADPH + H(+)</text>
        <dbReference type="Rhea" id="RHEA:22944"/>
        <dbReference type="ChEBI" id="CHEBI:15378"/>
        <dbReference type="ChEBI" id="CHEBI:16229"/>
        <dbReference type="ChEBI" id="CHEBI:30154"/>
        <dbReference type="ChEBI" id="CHEBI:57783"/>
        <dbReference type="ChEBI" id="CHEBI:58349"/>
    </reaction>
    <physiologicalReaction direction="right-to-left" evidence="4">
        <dbReference type="Rhea" id="RHEA:22946"/>
    </physiologicalReaction>
</comment>
<comment type="catalytic activity">
    <reaction evidence="4">
        <text>5beta-dihydrotestosterone + NADPH + H(+) = 5beta-androstane-3beta,17beta-diol + NADP(+)</text>
        <dbReference type="Rhea" id="RHEA:69012"/>
        <dbReference type="ChEBI" id="CHEBI:2150"/>
        <dbReference type="ChEBI" id="CHEBI:15378"/>
        <dbReference type="ChEBI" id="CHEBI:36715"/>
        <dbReference type="ChEBI" id="CHEBI:57783"/>
        <dbReference type="ChEBI" id="CHEBI:58349"/>
    </reaction>
    <physiologicalReaction direction="left-to-right" evidence="4">
        <dbReference type="Rhea" id="RHEA:69013"/>
    </physiologicalReaction>
</comment>
<comment type="catalytic activity">
    <reaction evidence="4">
        <text>5beta-androstane-3,17-dione + NADPH + H(+) = 3beta-hydroxy-5beta-androstane-17-one + NADP(+)</text>
        <dbReference type="Rhea" id="RHEA:69036"/>
        <dbReference type="ChEBI" id="CHEBI:15378"/>
        <dbReference type="ChEBI" id="CHEBI:16985"/>
        <dbReference type="ChEBI" id="CHEBI:57783"/>
        <dbReference type="ChEBI" id="CHEBI:58349"/>
        <dbReference type="ChEBI" id="CHEBI:89524"/>
    </reaction>
    <physiologicalReaction direction="left-to-right" evidence="4">
        <dbReference type="Rhea" id="RHEA:69037"/>
    </physiologicalReaction>
</comment>
<comment type="catalytic activity">
    <reaction evidence="4">
        <text>isatin + NADPH + H(+) = 3-hydroxyindolin-2-one + NADP(+)</text>
        <dbReference type="Rhea" id="RHEA:68608"/>
        <dbReference type="ChEBI" id="CHEBI:15378"/>
        <dbReference type="ChEBI" id="CHEBI:27539"/>
        <dbReference type="ChEBI" id="CHEBI:28536"/>
        <dbReference type="ChEBI" id="CHEBI:57783"/>
        <dbReference type="ChEBI" id="CHEBI:58349"/>
    </reaction>
    <physiologicalReaction direction="left-to-right" evidence="4">
        <dbReference type="Rhea" id="RHEA:68609"/>
    </physiologicalReaction>
</comment>
<comment type="catalytic activity">
    <reaction evidence="4">
        <text>lithocholate + NADP(+) = 3-oxo-5beta-cholan-24-oate + NADPH + H(+)</text>
        <dbReference type="Rhea" id="RHEA:47496"/>
        <dbReference type="ChEBI" id="CHEBI:11867"/>
        <dbReference type="ChEBI" id="CHEBI:15378"/>
        <dbReference type="ChEBI" id="CHEBI:29744"/>
        <dbReference type="ChEBI" id="CHEBI:57783"/>
        <dbReference type="ChEBI" id="CHEBI:58349"/>
    </reaction>
    <physiologicalReaction direction="right-to-left" evidence="4">
        <dbReference type="Rhea" id="RHEA:47498"/>
    </physiologicalReaction>
</comment>
<comment type="catalytic activity">
    <reaction evidence="4">
        <text>3-oxo-5beta-cholan-24-oate + NADPH + H(+) = isolithocholate + NADP(+)</text>
        <dbReference type="Rhea" id="RHEA:47520"/>
        <dbReference type="ChEBI" id="CHEBI:11867"/>
        <dbReference type="ChEBI" id="CHEBI:15378"/>
        <dbReference type="ChEBI" id="CHEBI:57783"/>
        <dbReference type="ChEBI" id="CHEBI:58349"/>
        <dbReference type="ChEBI" id="CHEBI:87728"/>
    </reaction>
    <physiologicalReaction direction="left-to-right" evidence="4">
        <dbReference type="Rhea" id="RHEA:47521"/>
    </physiologicalReaction>
</comment>
<comment type="subunit">
    <text evidence="5">Homotetramer.</text>
</comment>
<comment type="subcellular location">
    <subcellularLocation>
        <location evidence="4">Peroxisome</location>
    </subcellularLocation>
</comment>
<comment type="domain">
    <text evidence="1">The C-terminus peroxisomal targeting signal tripeptide is important for peroxisomal import. Once in the peroxisome, it is involved in intersubunit interactions.</text>
</comment>
<comment type="domain">
    <text evidence="4">Three specific residues, Ser-176, Phe-179 and Thr-195 are conserved between primates whereas the respective residues are phenylalanine, leucine, and asparagine in the other mammal enzymes. The two residues at positions 176 and 179 are molecular determinants responsible for the stereoselective reduction of 3-ketosteroids and benzil. The presence of an asparagine at position 195 is important for the maintenance of the quaternary structure and stability at cold temperature. The absence of an asparagine at position 195 destabilizes the quaternary structure, thereby affecting catalytic efficiency toward some substrates and decreasing stability at cold temperature.</text>
</comment>
<comment type="miscellaneous">
    <text evidence="4">Primate DHRS4s display different stereoselectivity and catalytic efficiency in the oxidoreduction of some substrates as compared to other mammal DHRS4s due to a difference in conserved amino acid residues.</text>
</comment>
<comment type="similarity">
    <text evidence="7">Belongs to the short-chain dehydrogenases/reductases (SDR) family.</text>
</comment>
<evidence type="ECO:0000250" key="1">
    <source>
        <dbReference type="UniProtKB" id="Q8WNV7"/>
    </source>
</evidence>
<evidence type="ECO:0000250" key="2">
    <source>
        <dbReference type="UniProtKB" id="Q99714"/>
    </source>
</evidence>
<evidence type="ECO:0000250" key="3">
    <source>
        <dbReference type="UniProtKB" id="Q99LB2"/>
    </source>
</evidence>
<evidence type="ECO:0000250" key="4">
    <source>
        <dbReference type="UniProtKB" id="Q9BTZ2"/>
    </source>
</evidence>
<evidence type="ECO:0000250" key="5">
    <source>
        <dbReference type="UniProtKB" id="Q9GKX2"/>
    </source>
</evidence>
<evidence type="ECO:0000255" key="6">
    <source>
        <dbReference type="PROSITE-ProRule" id="PRU10001"/>
    </source>
</evidence>
<evidence type="ECO:0000305" key="7"/>
<dbReference type="EC" id="1.1.1.184" evidence="4"/>
<dbReference type="EMBL" id="CR858312">
    <property type="protein sequence ID" value="CAH90549.1"/>
    <property type="molecule type" value="mRNA"/>
</dbReference>
<dbReference type="EMBL" id="CR858929">
    <property type="protein sequence ID" value="CAH91127.1"/>
    <property type="molecule type" value="mRNA"/>
</dbReference>
<dbReference type="RefSeq" id="NP_001125292.1">
    <property type="nucleotide sequence ID" value="NM_001131820.2"/>
</dbReference>
<dbReference type="RefSeq" id="XP_009247234.1">
    <property type="nucleotide sequence ID" value="XM_009248959.1"/>
</dbReference>
<dbReference type="SMR" id="Q5RCF8"/>
<dbReference type="FunCoup" id="Q5RCF8">
    <property type="interactions" value="1110"/>
</dbReference>
<dbReference type="STRING" id="9601.ENSPPYP00000006452"/>
<dbReference type="Ensembl" id="ENSPPYT00000006707.3">
    <property type="protein sequence ID" value="ENSPPYP00000006452.3"/>
    <property type="gene ID" value="ENSPPYG00000005675.3"/>
</dbReference>
<dbReference type="GeneID" id="100172190"/>
<dbReference type="KEGG" id="pon:100172190"/>
<dbReference type="CTD" id="10901"/>
<dbReference type="eggNOG" id="KOG0725">
    <property type="taxonomic scope" value="Eukaryota"/>
</dbReference>
<dbReference type="GeneTree" id="ENSGT00940000158919"/>
<dbReference type="InParanoid" id="Q5RCF8"/>
<dbReference type="OMA" id="WEVANVI"/>
<dbReference type="OrthoDB" id="3592703at2759"/>
<dbReference type="Proteomes" id="UP000001595">
    <property type="component" value="Chromosome 14"/>
</dbReference>
<dbReference type="GO" id="GO:0005778">
    <property type="term" value="C:peroxisomal membrane"/>
    <property type="evidence" value="ECO:0007669"/>
    <property type="project" value="Ensembl"/>
</dbReference>
<dbReference type="GO" id="GO:0033703">
    <property type="term" value="F:3-beta-hydroxy-5-beta-steroid dehydrogenase (NADP+) activity"/>
    <property type="evidence" value="ECO:0007669"/>
    <property type="project" value="RHEA"/>
</dbReference>
<dbReference type="GO" id="GO:0000253">
    <property type="term" value="F:3-beta-hydroxysteroid 3-dehydrogenase (NADP+) activity"/>
    <property type="evidence" value="ECO:0007669"/>
    <property type="project" value="Ensembl"/>
</dbReference>
<dbReference type="GO" id="GO:0004090">
    <property type="term" value="F:carbonyl reductase (NADPH) activity"/>
    <property type="evidence" value="ECO:0000250"/>
    <property type="project" value="UniProtKB"/>
</dbReference>
<dbReference type="GO" id="GO:0042802">
    <property type="term" value="F:identical protein binding"/>
    <property type="evidence" value="ECO:0000250"/>
    <property type="project" value="UniProtKB"/>
</dbReference>
<dbReference type="GO" id="GO:0016655">
    <property type="term" value="F:oxidoreductase activity, acting on NAD(P)H, quinone or similar compound as acceptor"/>
    <property type="evidence" value="ECO:0007669"/>
    <property type="project" value="Ensembl"/>
</dbReference>
<dbReference type="GO" id="GO:0006066">
    <property type="term" value="P:alcohol metabolic process"/>
    <property type="evidence" value="ECO:0007669"/>
    <property type="project" value="Ensembl"/>
</dbReference>
<dbReference type="GO" id="GO:0042180">
    <property type="term" value="P:ketone metabolic process"/>
    <property type="evidence" value="ECO:0000250"/>
    <property type="project" value="UniProtKB"/>
</dbReference>
<dbReference type="GO" id="GO:2000379">
    <property type="term" value="P:positive regulation of reactive oxygen species metabolic process"/>
    <property type="evidence" value="ECO:0007669"/>
    <property type="project" value="Ensembl"/>
</dbReference>
<dbReference type="GO" id="GO:0042574">
    <property type="term" value="P:retinal metabolic process"/>
    <property type="evidence" value="ECO:0007669"/>
    <property type="project" value="TreeGrafter"/>
</dbReference>
<dbReference type="GO" id="GO:0008202">
    <property type="term" value="P:steroid metabolic process"/>
    <property type="evidence" value="ECO:0000250"/>
    <property type="project" value="UniProtKB"/>
</dbReference>
<dbReference type="CDD" id="cd08936">
    <property type="entry name" value="CR_SDR_c"/>
    <property type="match status" value="1"/>
</dbReference>
<dbReference type="FunFam" id="3.40.50.720:FF:000084">
    <property type="entry name" value="Short-chain dehydrogenase reductase"/>
    <property type="match status" value="1"/>
</dbReference>
<dbReference type="Gene3D" id="3.40.50.720">
    <property type="entry name" value="NAD(P)-binding Rossmann-like Domain"/>
    <property type="match status" value="1"/>
</dbReference>
<dbReference type="InterPro" id="IPR036291">
    <property type="entry name" value="NAD(P)-bd_dom_sf"/>
</dbReference>
<dbReference type="InterPro" id="IPR020904">
    <property type="entry name" value="Sc_DH/Rdtase_CS"/>
</dbReference>
<dbReference type="InterPro" id="IPR002347">
    <property type="entry name" value="SDR_fam"/>
</dbReference>
<dbReference type="NCBIfam" id="NF005559">
    <property type="entry name" value="PRK07231.1"/>
    <property type="match status" value="1"/>
</dbReference>
<dbReference type="PANTHER" id="PTHR43943">
    <property type="entry name" value="DEHYDROGENASE/REDUCTASE (SDR FAMILY) MEMBER 4"/>
    <property type="match status" value="1"/>
</dbReference>
<dbReference type="PANTHER" id="PTHR43943:SF8">
    <property type="entry name" value="DEHYDROGENASE_REDUCTASE SDR FAMILY MEMBER 4-RELATED"/>
    <property type="match status" value="1"/>
</dbReference>
<dbReference type="Pfam" id="PF13561">
    <property type="entry name" value="adh_short_C2"/>
    <property type="match status" value="1"/>
</dbReference>
<dbReference type="PRINTS" id="PR00081">
    <property type="entry name" value="GDHRDH"/>
</dbReference>
<dbReference type="PRINTS" id="PR00080">
    <property type="entry name" value="SDRFAMILY"/>
</dbReference>
<dbReference type="SUPFAM" id="SSF51735">
    <property type="entry name" value="NAD(P)-binding Rossmann-fold domains"/>
    <property type="match status" value="1"/>
</dbReference>
<dbReference type="PROSITE" id="PS00061">
    <property type="entry name" value="ADH_SHORT"/>
    <property type="match status" value="1"/>
</dbReference>
<accession>Q5RCF8</accession>
<accession>Q5RAT3</accession>
<name>DHRS4_PONAB</name>
<feature type="chain" id="PRO_0000054650" description="Dehydrogenase/reductase SDR family member 4">
    <location>
        <begin position="1"/>
        <end position="278"/>
    </location>
</feature>
<feature type="short sequence motif" description="Peroxisomal targeting signal">
    <location>
        <begin position="276"/>
        <end position="278"/>
    </location>
</feature>
<feature type="active site" description="Proton acceptor" evidence="6">
    <location>
        <position position="182"/>
    </location>
</feature>
<feature type="binding site" evidence="1">
    <location>
        <begin position="36"/>
        <end position="60"/>
    </location>
    <ligand>
        <name>NADP(+)</name>
        <dbReference type="ChEBI" id="CHEBI:58349"/>
    </ligand>
</feature>
<feature type="binding site" evidence="2">
    <location>
        <position position="169"/>
    </location>
    <ligand>
        <name>substrate</name>
    </ligand>
</feature>
<feature type="binding site" evidence="1">
    <location>
        <position position="186"/>
    </location>
    <ligand>
        <name>NADP(+)</name>
        <dbReference type="ChEBI" id="CHEBI:58349"/>
    </ligand>
</feature>
<feature type="site" description="Responsible for the stereoselective reduction of 3-ketosteroids into 3beta-hydroxysteroids and benzil into R-benzoin" evidence="4">
    <location>
        <position position="176"/>
    </location>
</feature>
<feature type="site" description="Responsible for the stereoselective reduction of 3-ketosteroids into 3beta-hydroxysteroids and benzil into R-benzoin" evidence="4">
    <location>
        <position position="179"/>
    </location>
</feature>
<feature type="modified residue" description="N6-acetyllysine; alternate" evidence="3">
    <location>
        <position position="92"/>
    </location>
</feature>
<feature type="modified residue" description="N6-succinyllysine; alternate" evidence="3">
    <location>
        <position position="92"/>
    </location>
</feature>
<feature type="modified residue" description="N6-acetyllysine" evidence="3">
    <location>
        <position position="105"/>
    </location>
</feature>
<feature type="modified residue" description="N6-acetyllysine; alternate" evidence="3">
    <location>
        <position position="216"/>
    </location>
</feature>
<feature type="modified residue" description="N6-succinyllysine; alternate" evidence="3">
    <location>
        <position position="216"/>
    </location>
</feature>
<feature type="modified residue" description="Phosphoserine" evidence="3">
    <location>
        <position position="220"/>
    </location>
</feature>
<feature type="modified residue" description="N6-succinyllysine" evidence="3">
    <location>
        <position position="227"/>
    </location>
</feature>
<feature type="modified residue" description="N6-succinyllysine" evidence="3">
    <location>
        <position position="234"/>
    </location>
</feature>
<reference key="1">
    <citation type="submission" date="2004-11" db="EMBL/GenBank/DDBJ databases">
        <authorList>
            <consortium name="The German cDNA consortium"/>
        </authorList>
    </citation>
    <scope>NUCLEOTIDE SEQUENCE [LARGE SCALE MRNA]</scope>
    <source>
        <tissue>Kidney</tissue>
    </source>
</reference>
<proteinExistence type="evidence at transcript level"/>
<keyword id="KW-0007">Acetylation</keyword>
<keyword id="KW-0521">NADP</keyword>
<keyword id="KW-0560">Oxidoreductase</keyword>
<keyword id="KW-0576">Peroxisome</keyword>
<keyword id="KW-0597">Phosphoprotein</keyword>
<keyword id="KW-1185">Reference proteome</keyword>
<protein>
    <recommendedName>
        <fullName evidence="4">Dehydrogenase/reductase SDR family member 4</fullName>
        <ecNumber evidence="4">1.1.1.184</ecNumber>
    </recommendedName>
    <alternativeName>
        <fullName evidence="1">NADPH-dependent carbonyl reductase</fullName>
        <shortName evidence="1">CR</shortName>
    </alternativeName>
    <alternativeName>
        <fullName>NADPH-dependent retinol dehydrogenase/reductase</fullName>
        <shortName>NDRD</shortName>
    </alternativeName>
    <alternativeName>
        <fullName>Peroxisomal short-chain alcohol dehydrogenase</fullName>
        <shortName>PSCD</shortName>
    </alternativeName>
    <alternativeName>
        <fullName evidence="4">Short chain dehydrogenase/reductase family 25C member 2</fullName>
        <shortName evidence="4">Protein SDR25C2</shortName>
    </alternativeName>
</protein>
<organism>
    <name type="scientific">Pongo abelii</name>
    <name type="common">Sumatran orangutan</name>
    <name type="synonym">Pongo pygmaeus abelii</name>
    <dbReference type="NCBI Taxonomy" id="9601"/>
    <lineage>
        <taxon>Eukaryota</taxon>
        <taxon>Metazoa</taxon>
        <taxon>Chordata</taxon>
        <taxon>Craniata</taxon>
        <taxon>Vertebrata</taxon>
        <taxon>Euteleostomi</taxon>
        <taxon>Mammalia</taxon>
        <taxon>Eutheria</taxon>
        <taxon>Euarchontoglires</taxon>
        <taxon>Primates</taxon>
        <taxon>Haplorrhini</taxon>
        <taxon>Catarrhini</taxon>
        <taxon>Hominidae</taxon>
        <taxon>Pongo</taxon>
    </lineage>
</organism>
<gene>
    <name type="primary">DHRS4</name>
</gene>